<proteinExistence type="evidence at transcript level"/>
<keyword id="KW-0106">Calcium</keyword>
<keyword id="KW-1015">Disulfide bond</keyword>
<keyword id="KW-0325">Glycoprotein</keyword>
<keyword id="KW-0378">Hydrolase</keyword>
<keyword id="KW-0479">Metal-binding</keyword>
<keyword id="KW-0645">Protease</keyword>
<keyword id="KW-1185">Reference proteome</keyword>
<keyword id="KW-0964">Secreted</keyword>
<keyword id="KW-0720">Serine protease</keyword>
<keyword id="KW-0732">Signal</keyword>
<keyword id="KW-0865">Zymogen</keyword>
<reference key="1">
    <citation type="submission" date="2003-01" db="EMBL/GenBank/DDBJ databases">
        <title>Canis familiaris pancreatic elastase 1 mRNA, complete cds.</title>
        <authorList>
            <person name="Kano R."/>
            <person name="Hasegawa A."/>
        </authorList>
    </citation>
    <scope>NUCLEOTIDE SEQUENCE [MRNA]</scope>
    <source>
        <tissue>Pancreas</tissue>
    </source>
</reference>
<evidence type="ECO:0000250" key="1">
    <source>
        <dbReference type="UniProtKB" id="P00772"/>
    </source>
</evidence>
<evidence type="ECO:0000250" key="2">
    <source>
        <dbReference type="UniProtKB" id="Q91X79"/>
    </source>
</evidence>
<evidence type="ECO:0000255" key="3"/>
<evidence type="ECO:0000255" key="4">
    <source>
        <dbReference type="PROSITE-ProRule" id="PRU00274"/>
    </source>
</evidence>
<gene>
    <name type="primary">CELA1</name>
    <name type="synonym">ELA1</name>
    <name type="synonym">ELS1</name>
</gene>
<accession>Q867B0</accession>
<feature type="signal peptide" evidence="1">
    <location>
        <begin position="1"/>
        <end position="8"/>
    </location>
</feature>
<feature type="propeptide" id="PRO_0000027673" description="Activation peptide" evidence="1">
    <location>
        <begin position="9"/>
        <end position="18"/>
    </location>
</feature>
<feature type="chain" id="PRO_0000027674" description="Chymotrypsin-like elastase family member 1">
    <location>
        <begin position="19"/>
        <end position="258"/>
    </location>
</feature>
<feature type="domain" description="Peptidase S1" evidence="4">
    <location>
        <begin position="19"/>
        <end position="256"/>
    </location>
</feature>
<feature type="active site" description="Charge relay system" evidence="1">
    <location>
        <position position="63"/>
    </location>
</feature>
<feature type="active site" description="Charge relay system" evidence="1">
    <location>
        <position position="111"/>
    </location>
</feature>
<feature type="active site" description="Charge relay system" evidence="1">
    <location>
        <position position="206"/>
    </location>
</feature>
<feature type="binding site" evidence="1">
    <location>
        <position position="77"/>
    </location>
    <ligand>
        <name>Ca(2+)</name>
        <dbReference type="ChEBI" id="CHEBI:29108"/>
    </ligand>
</feature>
<feature type="binding site" evidence="1">
    <location>
        <position position="79"/>
    </location>
    <ligand>
        <name>Ca(2+)</name>
        <dbReference type="ChEBI" id="CHEBI:29108"/>
    </ligand>
</feature>
<feature type="binding site" evidence="1">
    <location>
        <position position="82"/>
    </location>
    <ligand>
        <name>Ca(2+)</name>
        <dbReference type="ChEBI" id="CHEBI:29108"/>
    </ligand>
</feature>
<feature type="binding site" evidence="1">
    <location>
        <position position="87"/>
    </location>
    <ligand>
        <name>Ca(2+)</name>
        <dbReference type="ChEBI" id="CHEBI:29108"/>
    </ligand>
</feature>
<feature type="glycosylation site" description="N-linked (GlcNAc...) asparagine" evidence="3">
    <location>
        <position position="79"/>
    </location>
</feature>
<feature type="glycosylation site" description="N-linked (GlcNAc...) asparagine" evidence="3">
    <location>
        <position position="233"/>
    </location>
</feature>
<feature type="disulfide bond" evidence="4">
    <location>
        <begin position="48"/>
        <end position="64"/>
    </location>
</feature>
<feature type="disulfide bond" evidence="4">
    <location>
        <begin position="145"/>
        <end position="212"/>
    </location>
</feature>
<feature type="disulfide bond" evidence="4">
    <location>
        <begin position="176"/>
        <end position="192"/>
    </location>
</feature>
<feature type="disulfide bond" evidence="4">
    <location>
        <begin position="202"/>
        <end position="232"/>
    </location>
</feature>
<sequence>MLVLYGHSTQDVPETNARVVGGTEARRNSWPSQISLQYLSGGKWYHTCGGTLIRQNWVMTAAHCVDRTMTFRVVIGEHNLSQNDGTEQSASVQKIVVHPYWNSNDVSAGYDIALLRLAQKVTLNSYVQLGVLPQEGAILANNSPCYITGWGLTKTNGQLAQVLQQAYLPTVDYAICSSSSYWGSIVKKSMVCAGGDGIRSGCQGDSGGPLHCSVNGKYTVHGVTSFVSSLGCNVSRKPTVFTRVSAYITWINNVIASN</sequence>
<dbReference type="EC" id="3.4.21.36"/>
<dbReference type="EMBL" id="AB100595">
    <property type="protein sequence ID" value="BAC55894.1"/>
    <property type="molecule type" value="mRNA"/>
</dbReference>
<dbReference type="SMR" id="Q867B0"/>
<dbReference type="FunCoup" id="Q867B0">
    <property type="interactions" value="12"/>
</dbReference>
<dbReference type="STRING" id="9615.ENSCAFP00000046064"/>
<dbReference type="MEROPS" id="S01.153"/>
<dbReference type="GlyCosmos" id="Q867B0">
    <property type="glycosylation" value="2 sites, No reported glycans"/>
</dbReference>
<dbReference type="PaxDb" id="9612-ENSCAFP00000011502"/>
<dbReference type="eggNOG" id="KOG3627">
    <property type="taxonomic scope" value="Eukaryota"/>
</dbReference>
<dbReference type="InParanoid" id="Q867B0"/>
<dbReference type="OrthoDB" id="10061449at2759"/>
<dbReference type="Proteomes" id="UP000002254">
    <property type="component" value="Unplaced"/>
</dbReference>
<dbReference type="Proteomes" id="UP000694429">
    <property type="component" value="Unplaced"/>
</dbReference>
<dbReference type="Proteomes" id="UP000694542">
    <property type="component" value="Unplaced"/>
</dbReference>
<dbReference type="Proteomes" id="UP000805418">
    <property type="component" value="Unplaced"/>
</dbReference>
<dbReference type="GO" id="GO:0005615">
    <property type="term" value="C:extracellular space"/>
    <property type="evidence" value="ECO:0000318"/>
    <property type="project" value="GO_Central"/>
</dbReference>
<dbReference type="GO" id="GO:0046872">
    <property type="term" value="F:metal ion binding"/>
    <property type="evidence" value="ECO:0007669"/>
    <property type="project" value="UniProtKB-KW"/>
</dbReference>
<dbReference type="GO" id="GO:0004252">
    <property type="term" value="F:serine-type endopeptidase activity"/>
    <property type="evidence" value="ECO:0000250"/>
    <property type="project" value="UniProtKB"/>
</dbReference>
<dbReference type="GO" id="GO:0006508">
    <property type="term" value="P:proteolysis"/>
    <property type="evidence" value="ECO:0000318"/>
    <property type="project" value="GO_Central"/>
</dbReference>
<dbReference type="CDD" id="cd00190">
    <property type="entry name" value="Tryp_SPc"/>
    <property type="match status" value="1"/>
</dbReference>
<dbReference type="FunFam" id="2.40.10.10:FF:000280">
    <property type="match status" value="1"/>
</dbReference>
<dbReference type="FunFam" id="2.40.10.10:FF:000122">
    <property type="entry name" value="Chymotrypsin-like elastase family member 1"/>
    <property type="match status" value="1"/>
</dbReference>
<dbReference type="Gene3D" id="2.40.10.10">
    <property type="entry name" value="Trypsin-like serine proteases"/>
    <property type="match status" value="2"/>
</dbReference>
<dbReference type="InterPro" id="IPR050850">
    <property type="entry name" value="Peptidase_S1_Elastase_sf"/>
</dbReference>
<dbReference type="InterPro" id="IPR009003">
    <property type="entry name" value="Peptidase_S1_PA"/>
</dbReference>
<dbReference type="InterPro" id="IPR043504">
    <property type="entry name" value="Peptidase_S1_PA_chymotrypsin"/>
</dbReference>
<dbReference type="InterPro" id="IPR001314">
    <property type="entry name" value="Peptidase_S1A"/>
</dbReference>
<dbReference type="InterPro" id="IPR001254">
    <property type="entry name" value="Trypsin_dom"/>
</dbReference>
<dbReference type="InterPro" id="IPR018114">
    <property type="entry name" value="TRYPSIN_HIS"/>
</dbReference>
<dbReference type="InterPro" id="IPR033116">
    <property type="entry name" value="TRYPSIN_SER"/>
</dbReference>
<dbReference type="PANTHER" id="PTHR24257">
    <property type="entry name" value="CHYMOTRYPSIN-LIKE ELASTASE FAMILY MEMBER"/>
    <property type="match status" value="1"/>
</dbReference>
<dbReference type="PANTHER" id="PTHR24257:SF0">
    <property type="entry name" value="CHYMOTRYPSIN-LIKE ELASTASE FAMILY MEMBER 1"/>
    <property type="match status" value="1"/>
</dbReference>
<dbReference type="Pfam" id="PF00089">
    <property type="entry name" value="Trypsin"/>
    <property type="match status" value="1"/>
</dbReference>
<dbReference type="PRINTS" id="PR00722">
    <property type="entry name" value="CHYMOTRYPSIN"/>
</dbReference>
<dbReference type="SMART" id="SM00020">
    <property type="entry name" value="Tryp_SPc"/>
    <property type="match status" value="1"/>
</dbReference>
<dbReference type="SUPFAM" id="SSF50494">
    <property type="entry name" value="Trypsin-like serine proteases"/>
    <property type="match status" value="1"/>
</dbReference>
<dbReference type="PROSITE" id="PS50240">
    <property type="entry name" value="TRYPSIN_DOM"/>
    <property type="match status" value="1"/>
</dbReference>
<dbReference type="PROSITE" id="PS00134">
    <property type="entry name" value="TRYPSIN_HIS"/>
    <property type="match status" value="1"/>
</dbReference>
<dbReference type="PROSITE" id="PS00135">
    <property type="entry name" value="TRYPSIN_SER"/>
    <property type="match status" value="1"/>
</dbReference>
<protein>
    <recommendedName>
        <fullName>Chymotrypsin-like elastase family member 1</fullName>
        <ecNumber>3.4.21.36</ecNumber>
    </recommendedName>
    <alternativeName>
        <fullName>Elastase-1</fullName>
    </alternativeName>
</protein>
<organism>
    <name type="scientific">Canis lupus familiaris</name>
    <name type="common">Dog</name>
    <name type="synonym">Canis familiaris</name>
    <dbReference type="NCBI Taxonomy" id="9615"/>
    <lineage>
        <taxon>Eukaryota</taxon>
        <taxon>Metazoa</taxon>
        <taxon>Chordata</taxon>
        <taxon>Craniata</taxon>
        <taxon>Vertebrata</taxon>
        <taxon>Euteleostomi</taxon>
        <taxon>Mammalia</taxon>
        <taxon>Eutheria</taxon>
        <taxon>Laurasiatheria</taxon>
        <taxon>Carnivora</taxon>
        <taxon>Caniformia</taxon>
        <taxon>Canidae</taxon>
        <taxon>Canis</taxon>
    </lineage>
</organism>
<name>CELA1_CANLF</name>
<comment type="function">
    <text evidence="2">Serine proteases that hydrolyze many proteins in addition to elastin.</text>
</comment>
<comment type="catalytic activity">
    <reaction evidence="2">
        <text>Hydrolysis of proteins, including elastin. Preferential cleavage: Ala-|-Xaa.</text>
        <dbReference type="EC" id="3.4.21.36"/>
    </reaction>
</comment>
<comment type="cofactor">
    <cofactor evidence="1">
        <name>Ca(2+)</name>
        <dbReference type="ChEBI" id="CHEBI:29108"/>
    </cofactor>
    <text evidence="1">Binds 1 Ca(2+) ion per subunit.</text>
</comment>
<comment type="subcellular location">
    <subcellularLocation>
        <location evidence="1">Secreted</location>
    </subcellularLocation>
</comment>
<comment type="similarity">
    <text evidence="4">Belongs to the peptidase S1 family. Elastase subfamily.</text>
</comment>